<comment type="function">
    <text evidence="1">Part of the Rad50/Mre11 complex, which is involved in the early steps of DNA double-strand break (DSB) repair. Mre11 binds to DSB ends and has both double-stranded 3'-5' exonuclease activity and single-stranded endonuclease activity.</text>
</comment>
<comment type="cofactor">
    <cofactor evidence="1">
        <name>Mn(2+)</name>
        <dbReference type="ChEBI" id="CHEBI:29035"/>
    </cofactor>
    <text evidence="1">Binds 2 manganese ions per subunit.</text>
</comment>
<comment type="activity regulation">
    <text evidence="1">Nuclease activity is regulated by Rad50.</text>
</comment>
<comment type="subunit">
    <text evidence="1">Homodimer. Forms a heterotetramer composed of two Mre11 subunits and two Rad50 subunits.</text>
</comment>
<comment type="disruption phenotype">
    <text evidence="3">Mutants show a slight growth defect, but do not show increased sensitivity to ionizing radiation or alkylating agents. Show decreased rates of survival after UV-C irradiation. Display extensive delay in the repair of DNA double-strand breaks.</text>
</comment>
<comment type="similarity">
    <text evidence="1">Belongs to the MRE11/RAD32 family.</text>
</comment>
<proteinExistence type="inferred from homology"/>
<organism>
    <name type="scientific">Halobacterium salinarum (strain ATCC 700922 / JCM 11081 / NRC-1)</name>
    <name type="common">Halobacterium halobium</name>
    <dbReference type="NCBI Taxonomy" id="64091"/>
    <lineage>
        <taxon>Archaea</taxon>
        <taxon>Methanobacteriati</taxon>
        <taxon>Methanobacteriota</taxon>
        <taxon>Stenosarchaea group</taxon>
        <taxon>Halobacteria</taxon>
        <taxon>Halobacteriales</taxon>
        <taxon>Halobacteriaceae</taxon>
        <taxon>Halobacterium</taxon>
        <taxon>Halobacterium salinarum NRC-34001</taxon>
    </lineage>
</organism>
<protein>
    <recommendedName>
        <fullName evidence="1">DNA double-strand break repair protein Mre11</fullName>
        <ecNumber evidence="1">3.1.-.-</ecNumber>
    </recommendedName>
</protein>
<evidence type="ECO:0000255" key="1">
    <source>
        <dbReference type="HAMAP-Rule" id="MF_02044"/>
    </source>
</evidence>
<evidence type="ECO:0000256" key="2">
    <source>
        <dbReference type="SAM" id="MobiDB-lite"/>
    </source>
</evidence>
<evidence type="ECO:0000269" key="3">
    <source>
    </source>
</evidence>
<keyword id="KW-0227">DNA damage</keyword>
<keyword id="KW-0234">DNA repair</keyword>
<keyword id="KW-0255">Endonuclease</keyword>
<keyword id="KW-0269">Exonuclease</keyword>
<keyword id="KW-0378">Hydrolase</keyword>
<keyword id="KW-0464">Manganese</keyword>
<keyword id="KW-0479">Metal-binding</keyword>
<keyword id="KW-0540">Nuclease</keyword>
<keyword id="KW-1185">Reference proteome</keyword>
<sequence length="387" mass="42685">MARVIHTGDTHLGYQQYHAPQRRQDFLDAFDAVITDAIDEGVDAVVHAGDLYHDRQPGLRDILDTIALLRPLQDADIPFLAVVGNHEGTRDAQWLDLFETLGLAERLDDSPRVVADTAFYGLDYVPQSKRDDHDYTVADHDADHAALVSHGLFTPFPYANWDLDAVLADATVEFDAVLLGDNHTPDTAQLGDTWVTYCGSTERASASERDPRGYNIVSFSSDATTDVAISRKSLNTREFVFVDADLGPTDGTAFIQERLRERALDDAVVVVTITGDGDTVTPAEIERFGDDRGALLTRVNDRREFDTGDDAPDVDVSFADPDDAVEQRVRDLGLDEPARDVDRIVRDDTLADAAVRERVIQRAEAVLDDDADAADDDGRPTTVEEFQ</sequence>
<feature type="chain" id="PRO_0000138686" description="DNA double-strand break repair protein Mre11">
    <location>
        <begin position="1"/>
        <end position="387"/>
    </location>
</feature>
<feature type="region of interest" description="Disordered" evidence="2">
    <location>
        <begin position="365"/>
        <end position="387"/>
    </location>
</feature>
<feature type="compositionally biased region" description="Acidic residues" evidence="2">
    <location>
        <begin position="366"/>
        <end position="375"/>
    </location>
</feature>
<feature type="active site" description="Proton donor" evidence="1">
    <location>
        <position position="86"/>
    </location>
</feature>
<feature type="binding site" evidence="1">
    <location>
        <position position="9"/>
    </location>
    <ligand>
        <name>Mn(2+)</name>
        <dbReference type="ChEBI" id="CHEBI:29035"/>
        <label>1</label>
    </ligand>
</feature>
<feature type="binding site" evidence="1">
    <location>
        <position position="11"/>
    </location>
    <ligand>
        <name>Mn(2+)</name>
        <dbReference type="ChEBI" id="CHEBI:29035"/>
        <label>1</label>
    </ligand>
</feature>
<feature type="binding site" evidence="1">
    <location>
        <position position="50"/>
    </location>
    <ligand>
        <name>Mn(2+)</name>
        <dbReference type="ChEBI" id="CHEBI:29035"/>
        <label>1</label>
    </ligand>
</feature>
<feature type="binding site" evidence="1">
    <location>
        <position position="50"/>
    </location>
    <ligand>
        <name>Mn(2+)</name>
        <dbReference type="ChEBI" id="CHEBI:29035"/>
        <label>2</label>
    </ligand>
</feature>
<feature type="binding site" evidence="1">
    <location>
        <position position="85"/>
    </location>
    <ligand>
        <name>Mn(2+)</name>
        <dbReference type="ChEBI" id="CHEBI:29035"/>
        <label>2</label>
    </ligand>
</feature>
<feature type="binding site" evidence="1">
    <location>
        <position position="150"/>
    </location>
    <ligand>
        <name>Mn(2+)</name>
        <dbReference type="ChEBI" id="CHEBI:29035"/>
        <label>2</label>
    </ligand>
</feature>
<feature type="binding site" evidence="1">
    <location>
        <position position="181"/>
    </location>
    <ligand>
        <name>Mn(2+)</name>
        <dbReference type="ChEBI" id="CHEBI:29035"/>
        <label>2</label>
    </ligand>
</feature>
<feature type="binding site" evidence="1">
    <location>
        <position position="183"/>
    </location>
    <ligand>
        <name>Mn(2+)</name>
        <dbReference type="ChEBI" id="CHEBI:29035"/>
        <label>1</label>
    </ligand>
</feature>
<name>MRE11_HALSA</name>
<accession>Q9HRW4</accession>
<gene>
    <name evidence="1" type="primary">mre11</name>
    <name type="ordered locus">VNG_0512G</name>
</gene>
<dbReference type="EC" id="3.1.-.-" evidence="1"/>
<dbReference type="EMBL" id="AE004437">
    <property type="protein sequence ID" value="AAG19044.1"/>
    <property type="molecule type" value="Genomic_DNA"/>
</dbReference>
<dbReference type="PIR" id="H84209">
    <property type="entry name" value="H84209"/>
</dbReference>
<dbReference type="RefSeq" id="WP_010902340.1">
    <property type="nucleotide sequence ID" value="NC_002607.1"/>
</dbReference>
<dbReference type="SMR" id="Q9HRW4"/>
<dbReference type="STRING" id="64091.VNG_0512G"/>
<dbReference type="PaxDb" id="64091-VNG_0512G"/>
<dbReference type="GeneID" id="68693416"/>
<dbReference type="KEGG" id="hal:VNG_0512G"/>
<dbReference type="PATRIC" id="fig|64091.14.peg.391"/>
<dbReference type="HOGENOM" id="CLU_026621_3_0_2"/>
<dbReference type="InParanoid" id="Q9HRW4"/>
<dbReference type="OrthoDB" id="11638at2157"/>
<dbReference type="PhylomeDB" id="Q9HRW4"/>
<dbReference type="Proteomes" id="UP000000554">
    <property type="component" value="Chromosome"/>
</dbReference>
<dbReference type="GO" id="GO:0008408">
    <property type="term" value="F:3'-5' exonuclease activity"/>
    <property type="evidence" value="ECO:0007669"/>
    <property type="project" value="UniProtKB-UniRule"/>
</dbReference>
<dbReference type="GO" id="GO:0003677">
    <property type="term" value="F:DNA binding"/>
    <property type="evidence" value="ECO:0000318"/>
    <property type="project" value="GO_Central"/>
</dbReference>
<dbReference type="GO" id="GO:0045027">
    <property type="term" value="F:DNA end binding"/>
    <property type="evidence" value="ECO:0007669"/>
    <property type="project" value="UniProtKB-UniRule"/>
</dbReference>
<dbReference type="GO" id="GO:0004529">
    <property type="term" value="F:DNA exonuclease activity"/>
    <property type="evidence" value="ECO:0000318"/>
    <property type="project" value="GO_Central"/>
</dbReference>
<dbReference type="GO" id="GO:0004519">
    <property type="term" value="F:endonuclease activity"/>
    <property type="evidence" value="ECO:0007669"/>
    <property type="project" value="UniProtKB-UniRule"/>
</dbReference>
<dbReference type="GO" id="GO:0030145">
    <property type="term" value="F:manganese ion binding"/>
    <property type="evidence" value="ECO:0007669"/>
    <property type="project" value="UniProtKB-UniRule"/>
</dbReference>
<dbReference type="GO" id="GO:0000403">
    <property type="term" value="F:Y-form DNA binding"/>
    <property type="evidence" value="ECO:0007669"/>
    <property type="project" value="UniProtKB-UniRule"/>
</dbReference>
<dbReference type="GO" id="GO:0006281">
    <property type="term" value="P:DNA repair"/>
    <property type="evidence" value="ECO:0000318"/>
    <property type="project" value="GO_Central"/>
</dbReference>
<dbReference type="GO" id="GO:0006302">
    <property type="term" value="P:double-strand break repair"/>
    <property type="evidence" value="ECO:0007669"/>
    <property type="project" value="UniProtKB-UniRule"/>
</dbReference>
<dbReference type="CDD" id="cd00840">
    <property type="entry name" value="MPP_Mre11_N"/>
    <property type="match status" value="1"/>
</dbReference>
<dbReference type="Gene3D" id="3.60.21.10">
    <property type="match status" value="1"/>
</dbReference>
<dbReference type="HAMAP" id="MF_02044">
    <property type="entry name" value="Mre11"/>
    <property type="match status" value="1"/>
</dbReference>
<dbReference type="InterPro" id="IPR004843">
    <property type="entry name" value="Calcineurin-like_PHP_ApaH"/>
</dbReference>
<dbReference type="InterPro" id="IPR050535">
    <property type="entry name" value="DNA_Repair-Maintenance_Comp"/>
</dbReference>
<dbReference type="InterPro" id="IPR029052">
    <property type="entry name" value="Metallo-depent_PP-like"/>
</dbReference>
<dbReference type="InterPro" id="IPR032885">
    <property type="entry name" value="Mre11_archaea-type"/>
</dbReference>
<dbReference type="InterPro" id="IPR054879">
    <property type="entry name" value="Mre11_Halo"/>
</dbReference>
<dbReference type="InterPro" id="IPR041796">
    <property type="entry name" value="Mre11_N"/>
</dbReference>
<dbReference type="NCBIfam" id="NF041030">
    <property type="entry name" value="Mre11_Halo"/>
    <property type="match status" value="1"/>
</dbReference>
<dbReference type="PANTHER" id="PTHR30337">
    <property type="entry name" value="COMPONENT OF ATP-DEPENDENT DSDNA EXONUCLEASE"/>
    <property type="match status" value="1"/>
</dbReference>
<dbReference type="PANTHER" id="PTHR30337:SF0">
    <property type="entry name" value="NUCLEASE SBCCD SUBUNIT D"/>
    <property type="match status" value="1"/>
</dbReference>
<dbReference type="Pfam" id="PF00149">
    <property type="entry name" value="Metallophos"/>
    <property type="match status" value="1"/>
</dbReference>
<dbReference type="SUPFAM" id="SSF56300">
    <property type="entry name" value="Metallo-dependent phosphatases"/>
    <property type="match status" value="1"/>
</dbReference>
<reference key="1">
    <citation type="journal article" date="2000" name="Proc. Natl. Acad. Sci. U.S.A.">
        <title>Genome sequence of Halobacterium species NRC-1.</title>
        <authorList>
            <person name="Ng W.V."/>
            <person name="Kennedy S.P."/>
            <person name="Mahairas G.G."/>
            <person name="Berquist B."/>
            <person name="Pan M."/>
            <person name="Shukla H.D."/>
            <person name="Lasky S.R."/>
            <person name="Baliga N.S."/>
            <person name="Thorsson V."/>
            <person name="Sbrogna J."/>
            <person name="Swartzell S."/>
            <person name="Weir D."/>
            <person name="Hall J."/>
            <person name="Dahl T.A."/>
            <person name="Welti R."/>
            <person name="Goo Y.A."/>
            <person name="Leithauser B."/>
            <person name="Keller K."/>
            <person name="Cruz R."/>
            <person name="Danson M.J."/>
            <person name="Hough D.W."/>
            <person name="Maddocks D.G."/>
            <person name="Jablonski P.E."/>
            <person name="Krebs M.P."/>
            <person name="Angevine C.M."/>
            <person name="Dale H."/>
            <person name="Isenbarger T.A."/>
            <person name="Peck R.F."/>
            <person name="Pohlschroder M."/>
            <person name="Spudich J.L."/>
            <person name="Jung K.-H."/>
            <person name="Alam M."/>
            <person name="Freitas T."/>
            <person name="Hou S."/>
            <person name="Daniels C.J."/>
            <person name="Dennis P.P."/>
            <person name="Omer A.D."/>
            <person name="Ebhardt H."/>
            <person name="Lowe T.M."/>
            <person name="Liang P."/>
            <person name="Riley M."/>
            <person name="Hood L."/>
            <person name="DasSarma S."/>
        </authorList>
    </citation>
    <scope>NUCLEOTIDE SEQUENCE [LARGE SCALE GENOMIC DNA]</scope>
    <source>
        <strain>ATCC 700922 / JCM 11081 / NRC-1</strain>
    </source>
</reference>
<reference key="2">
    <citation type="journal article" date="2008" name="J. Bacteriol.">
        <title>Rad50 is not essential for the Mre11-dependent repair of DNA double-strand breaks in Halobacterium sp. strain NRC-1.</title>
        <authorList>
            <person name="Kish A."/>
            <person name="DiRuggiero J."/>
        </authorList>
    </citation>
    <scope>DISRUPTION PHENOTYPE</scope>
    <source>
        <strain>ATCC 700922 / JCM 11081 / NRC-1</strain>
    </source>
</reference>